<dbReference type="EC" id="5.1.1.7" evidence="1"/>
<dbReference type="EMBL" id="CP000903">
    <property type="protein sequence ID" value="ABY45906.1"/>
    <property type="molecule type" value="Genomic_DNA"/>
</dbReference>
<dbReference type="RefSeq" id="WP_012261916.1">
    <property type="nucleotide sequence ID" value="NC_010184.1"/>
</dbReference>
<dbReference type="SMR" id="A9VN01"/>
<dbReference type="KEGG" id="bwe:BcerKBAB4_4756"/>
<dbReference type="eggNOG" id="COG0253">
    <property type="taxonomic scope" value="Bacteria"/>
</dbReference>
<dbReference type="HOGENOM" id="CLU_053306_3_0_9"/>
<dbReference type="UniPathway" id="UPA00034">
    <property type="reaction ID" value="UER00025"/>
</dbReference>
<dbReference type="Proteomes" id="UP000002154">
    <property type="component" value="Chromosome"/>
</dbReference>
<dbReference type="GO" id="GO:0005829">
    <property type="term" value="C:cytosol"/>
    <property type="evidence" value="ECO:0007669"/>
    <property type="project" value="TreeGrafter"/>
</dbReference>
<dbReference type="GO" id="GO:0008837">
    <property type="term" value="F:diaminopimelate epimerase activity"/>
    <property type="evidence" value="ECO:0007669"/>
    <property type="project" value="UniProtKB-UniRule"/>
</dbReference>
<dbReference type="GO" id="GO:0009089">
    <property type="term" value="P:lysine biosynthetic process via diaminopimelate"/>
    <property type="evidence" value="ECO:0007669"/>
    <property type="project" value="UniProtKB-UniRule"/>
</dbReference>
<dbReference type="FunFam" id="3.10.310.10:FF:000004">
    <property type="entry name" value="Diaminopimelate epimerase"/>
    <property type="match status" value="1"/>
</dbReference>
<dbReference type="FunFam" id="3.10.310.10:FF:000006">
    <property type="entry name" value="Diaminopimelate epimerase"/>
    <property type="match status" value="1"/>
</dbReference>
<dbReference type="Gene3D" id="3.10.310.10">
    <property type="entry name" value="Diaminopimelate Epimerase, Chain A, domain 1"/>
    <property type="match status" value="2"/>
</dbReference>
<dbReference type="HAMAP" id="MF_00197">
    <property type="entry name" value="DAP_epimerase"/>
    <property type="match status" value="1"/>
</dbReference>
<dbReference type="InterPro" id="IPR018510">
    <property type="entry name" value="DAP_epimerase_AS"/>
</dbReference>
<dbReference type="InterPro" id="IPR001653">
    <property type="entry name" value="DAP_epimerase_DapF"/>
</dbReference>
<dbReference type="NCBIfam" id="TIGR00652">
    <property type="entry name" value="DapF"/>
    <property type="match status" value="1"/>
</dbReference>
<dbReference type="PANTHER" id="PTHR31689:SF0">
    <property type="entry name" value="DIAMINOPIMELATE EPIMERASE"/>
    <property type="match status" value="1"/>
</dbReference>
<dbReference type="PANTHER" id="PTHR31689">
    <property type="entry name" value="DIAMINOPIMELATE EPIMERASE, CHLOROPLASTIC"/>
    <property type="match status" value="1"/>
</dbReference>
<dbReference type="Pfam" id="PF01678">
    <property type="entry name" value="DAP_epimerase"/>
    <property type="match status" value="2"/>
</dbReference>
<dbReference type="SUPFAM" id="SSF54506">
    <property type="entry name" value="Diaminopimelate epimerase-like"/>
    <property type="match status" value="1"/>
</dbReference>
<dbReference type="PROSITE" id="PS01326">
    <property type="entry name" value="DAP_EPIMERASE"/>
    <property type="match status" value="1"/>
</dbReference>
<feature type="chain" id="PRO_1000099219" description="Diaminopimelate epimerase">
    <location>
        <begin position="1"/>
        <end position="288"/>
    </location>
</feature>
<feature type="active site" description="Proton donor" evidence="1">
    <location>
        <position position="76"/>
    </location>
</feature>
<feature type="active site" description="Proton acceptor" evidence="1">
    <location>
        <position position="226"/>
    </location>
</feature>
<feature type="binding site" evidence="1">
    <location>
        <position position="14"/>
    </location>
    <ligand>
        <name>substrate</name>
    </ligand>
</feature>
<feature type="binding site" evidence="1">
    <location>
        <position position="67"/>
    </location>
    <ligand>
        <name>substrate</name>
    </ligand>
</feature>
<feature type="binding site" evidence="1">
    <location>
        <begin position="77"/>
        <end position="78"/>
    </location>
    <ligand>
        <name>substrate</name>
    </ligand>
</feature>
<feature type="binding site" evidence="1">
    <location>
        <position position="166"/>
    </location>
    <ligand>
        <name>substrate</name>
    </ligand>
</feature>
<feature type="binding site" evidence="1">
    <location>
        <position position="199"/>
    </location>
    <ligand>
        <name>substrate</name>
    </ligand>
</feature>
<feature type="binding site" evidence="1">
    <location>
        <begin position="217"/>
        <end position="218"/>
    </location>
    <ligand>
        <name>substrate</name>
    </ligand>
</feature>
<feature type="binding site" evidence="1">
    <location>
        <begin position="227"/>
        <end position="228"/>
    </location>
    <ligand>
        <name>substrate</name>
    </ligand>
</feature>
<feature type="site" description="Could be important to modulate the pK values of the two catalytic cysteine residues" evidence="1">
    <location>
        <position position="168"/>
    </location>
</feature>
<feature type="site" description="Could be important to modulate the pK values of the two catalytic cysteine residues" evidence="1">
    <location>
        <position position="217"/>
    </location>
</feature>
<accession>A9VN01</accession>
<evidence type="ECO:0000255" key="1">
    <source>
        <dbReference type="HAMAP-Rule" id="MF_00197"/>
    </source>
</evidence>
<gene>
    <name evidence="1" type="primary">dapF</name>
    <name type="ordered locus">BcerKBAB4_4756</name>
</gene>
<sequence>MSQFSFTKMHGLGNSYIYVNMFEEQIREEDLAIVAEKVSNINTGIGADGMILICPSDVAPVKMRMFNNDGSEGKSCGNGLRCVAKYAYEHKLVEGKVFTIETLAGIVTAEVTVEDDKVTLAKIDMGAPRLTREEIPMLGEGETPFIRENFLYNNHRYAFTAVSMGNPHAVIFVDDVENAPLTTLGPVLETHEMFPERVNVEFIEILNDEEMNFRVWERGSGVTQACGTGACAAVVAAILNGKMEHGKEITVHLAGGDLMIAWTEEGNVLMKGPAEIICRGVYEYKIEA</sequence>
<name>DAPF_BACMK</name>
<organism>
    <name type="scientific">Bacillus mycoides (strain KBAB4)</name>
    <name type="common">Bacillus weihenstephanensis</name>
    <dbReference type="NCBI Taxonomy" id="315730"/>
    <lineage>
        <taxon>Bacteria</taxon>
        <taxon>Bacillati</taxon>
        <taxon>Bacillota</taxon>
        <taxon>Bacilli</taxon>
        <taxon>Bacillales</taxon>
        <taxon>Bacillaceae</taxon>
        <taxon>Bacillus</taxon>
        <taxon>Bacillus cereus group</taxon>
    </lineage>
</organism>
<proteinExistence type="inferred from homology"/>
<protein>
    <recommendedName>
        <fullName evidence="1">Diaminopimelate epimerase</fullName>
        <shortName evidence="1">DAP epimerase</shortName>
        <ecNumber evidence="1">5.1.1.7</ecNumber>
    </recommendedName>
    <alternativeName>
        <fullName evidence="1">PLP-independent amino acid racemase</fullName>
    </alternativeName>
</protein>
<comment type="function">
    <text evidence="1">Catalyzes the stereoinversion of LL-2,6-diaminopimelate (L,L-DAP) to meso-diaminopimelate (meso-DAP), a precursor of L-lysine and an essential component of the bacterial peptidoglycan.</text>
</comment>
<comment type="catalytic activity">
    <reaction evidence="1">
        <text>(2S,6S)-2,6-diaminopimelate = meso-2,6-diaminopimelate</text>
        <dbReference type="Rhea" id="RHEA:15393"/>
        <dbReference type="ChEBI" id="CHEBI:57609"/>
        <dbReference type="ChEBI" id="CHEBI:57791"/>
        <dbReference type="EC" id="5.1.1.7"/>
    </reaction>
</comment>
<comment type="pathway">
    <text evidence="1">Amino-acid biosynthesis; L-lysine biosynthesis via DAP pathway; DL-2,6-diaminopimelate from LL-2,6-diaminopimelate: step 1/1.</text>
</comment>
<comment type="subunit">
    <text evidence="1">Homodimer.</text>
</comment>
<comment type="subcellular location">
    <subcellularLocation>
        <location evidence="1">Cytoplasm</location>
    </subcellularLocation>
</comment>
<comment type="similarity">
    <text evidence="1">Belongs to the diaminopimelate epimerase family.</text>
</comment>
<keyword id="KW-0028">Amino-acid biosynthesis</keyword>
<keyword id="KW-0963">Cytoplasm</keyword>
<keyword id="KW-0413">Isomerase</keyword>
<keyword id="KW-0457">Lysine biosynthesis</keyword>
<reference key="1">
    <citation type="journal article" date="2008" name="Chem. Biol. Interact.">
        <title>Extending the Bacillus cereus group genomics to putative food-borne pathogens of different toxicity.</title>
        <authorList>
            <person name="Lapidus A."/>
            <person name="Goltsman E."/>
            <person name="Auger S."/>
            <person name="Galleron N."/>
            <person name="Segurens B."/>
            <person name="Dossat C."/>
            <person name="Land M.L."/>
            <person name="Broussolle V."/>
            <person name="Brillard J."/>
            <person name="Guinebretiere M.-H."/>
            <person name="Sanchis V."/>
            <person name="Nguen-the C."/>
            <person name="Lereclus D."/>
            <person name="Richardson P."/>
            <person name="Wincker P."/>
            <person name="Weissenbach J."/>
            <person name="Ehrlich S.D."/>
            <person name="Sorokin A."/>
        </authorList>
    </citation>
    <scope>NUCLEOTIDE SEQUENCE [LARGE SCALE GENOMIC DNA]</scope>
    <source>
        <strain>KBAB4</strain>
    </source>
</reference>